<keyword id="KW-0143">Chaperone</keyword>
<keyword id="KW-0186">Copper</keyword>
<keyword id="KW-0963">Cytoplasm</keyword>
<keyword id="KW-0479">Metal-binding</keyword>
<keyword id="KW-1185">Reference proteome</keyword>
<dbReference type="EMBL" id="AP008934">
    <property type="protein sequence ID" value="BAE17441.1"/>
    <property type="molecule type" value="Genomic_DNA"/>
</dbReference>
<dbReference type="RefSeq" id="WP_011302280.1">
    <property type="nucleotide sequence ID" value="NZ_MTGA01000037.1"/>
</dbReference>
<dbReference type="SMR" id="Q4A0G2"/>
<dbReference type="GeneID" id="3615946"/>
<dbReference type="KEGG" id="ssp:SSP0296"/>
<dbReference type="PATRIC" id="fig|342451.11.peg.299"/>
<dbReference type="eggNOG" id="COG2608">
    <property type="taxonomic scope" value="Bacteria"/>
</dbReference>
<dbReference type="HOGENOM" id="CLU_134973_10_4_9"/>
<dbReference type="OrthoDB" id="9813965at2"/>
<dbReference type="Proteomes" id="UP000006371">
    <property type="component" value="Chromosome"/>
</dbReference>
<dbReference type="GO" id="GO:0005737">
    <property type="term" value="C:cytoplasm"/>
    <property type="evidence" value="ECO:0007669"/>
    <property type="project" value="UniProtKB-SubCell"/>
</dbReference>
<dbReference type="GO" id="GO:0005507">
    <property type="term" value="F:copper ion binding"/>
    <property type="evidence" value="ECO:0007669"/>
    <property type="project" value="InterPro"/>
</dbReference>
<dbReference type="CDD" id="cd00371">
    <property type="entry name" value="HMA"/>
    <property type="match status" value="1"/>
</dbReference>
<dbReference type="FunFam" id="3.30.70.100:FF:000005">
    <property type="entry name" value="Copper-exporting P-type ATPase A"/>
    <property type="match status" value="1"/>
</dbReference>
<dbReference type="Gene3D" id="3.30.70.100">
    <property type="match status" value="1"/>
</dbReference>
<dbReference type="InterPro" id="IPR049740">
    <property type="entry name" value="CopZ"/>
</dbReference>
<dbReference type="InterPro" id="IPR017969">
    <property type="entry name" value="Heavy-metal-associated_CS"/>
</dbReference>
<dbReference type="InterPro" id="IPR006122">
    <property type="entry name" value="HMA_Cu_ion-bd"/>
</dbReference>
<dbReference type="InterPro" id="IPR006121">
    <property type="entry name" value="HMA_dom"/>
</dbReference>
<dbReference type="InterPro" id="IPR036163">
    <property type="entry name" value="HMA_dom_sf"/>
</dbReference>
<dbReference type="InterPro" id="IPR001802">
    <property type="entry name" value="MerP/CopZ"/>
</dbReference>
<dbReference type="NCBIfam" id="NF033795">
    <property type="entry name" value="chaper_CopZ_Bs"/>
    <property type="match status" value="1"/>
</dbReference>
<dbReference type="NCBIfam" id="TIGR00003">
    <property type="entry name" value="copper ion binding protein"/>
    <property type="match status" value="1"/>
</dbReference>
<dbReference type="PANTHER" id="PTHR46594">
    <property type="entry name" value="P-TYPE CATION-TRANSPORTING ATPASE"/>
    <property type="match status" value="1"/>
</dbReference>
<dbReference type="PANTHER" id="PTHR46594:SF4">
    <property type="entry name" value="P-TYPE CATION-TRANSPORTING ATPASE"/>
    <property type="match status" value="1"/>
</dbReference>
<dbReference type="Pfam" id="PF00403">
    <property type="entry name" value="HMA"/>
    <property type="match status" value="1"/>
</dbReference>
<dbReference type="PRINTS" id="PR00946">
    <property type="entry name" value="HGSCAVENGER"/>
</dbReference>
<dbReference type="SUPFAM" id="SSF55008">
    <property type="entry name" value="HMA, heavy metal-associated domain"/>
    <property type="match status" value="1"/>
</dbReference>
<dbReference type="PROSITE" id="PS01047">
    <property type="entry name" value="HMA_1"/>
    <property type="match status" value="1"/>
</dbReference>
<dbReference type="PROSITE" id="PS50846">
    <property type="entry name" value="HMA_2"/>
    <property type="match status" value="1"/>
</dbReference>
<sequence length="68" mass="7377">MATETIQVEGMSCDHCKHAVETALTELDGVSTADVSLEAGNVKVDFDDDKVTMPQMKDAIEDQGYDVK</sequence>
<protein>
    <recommendedName>
        <fullName>Copper chaperone CopZ</fullName>
    </recommendedName>
</protein>
<name>COPZ_STAS1</name>
<accession>Q4A0G2</accession>
<organism>
    <name type="scientific">Staphylococcus saprophyticus subsp. saprophyticus (strain ATCC 15305 / DSM 20229 / NCIMB 8711 / NCTC 7292 / S-41)</name>
    <dbReference type="NCBI Taxonomy" id="342451"/>
    <lineage>
        <taxon>Bacteria</taxon>
        <taxon>Bacillati</taxon>
        <taxon>Bacillota</taxon>
        <taxon>Bacilli</taxon>
        <taxon>Bacillales</taxon>
        <taxon>Staphylococcaceae</taxon>
        <taxon>Staphylococcus</taxon>
    </lineage>
</organism>
<feature type="chain" id="PRO_0000351287" description="Copper chaperone CopZ">
    <location>
        <begin position="1"/>
        <end position="68"/>
    </location>
</feature>
<feature type="domain" description="HMA" evidence="2">
    <location>
        <begin position="2"/>
        <end position="68"/>
    </location>
</feature>
<feature type="binding site" evidence="2">
    <location>
        <position position="13"/>
    </location>
    <ligand>
        <name>Cu cation</name>
        <dbReference type="ChEBI" id="CHEBI:23378"/>
    </ligand>
</feature>
<feature type="binding site" evidence="2">
    <location>
        <position position="16"/>
    </location>
    <ligand>
        <name>Cu cation</name>
        <dbReference type="ChEBI" id="CHEBI:23378"/>
    </ligand>
</feature>
<reference key="1">
    <citation type="journal article" date="2005" name="Proc. Natl. Acad. Sci. U.S.A.">
        <title>Whole genome sequence of Staphylococcus saprophyticus reveals the pathogenesis of uncomplicated urinary tract infection.</title>
        <authorList>
            <person name="Kuroda M."/>
            <person name="Yamashita A."/>
            <person name="Hirakawa H."/>
            <person name="Kumano M."/>
            <person name="Morikawa K."/>
            <person name="Higashide M."/>
            <person name="Maruyama A."/>
            <person name="Inose Y."/>
            <person name="Matoba K."/>
            <person name="Toh H."/>
            <person name="Kuhara S."/>
            <person name="Hattori M."/>
            <person name="Ohta T."/>
        </authorList>
    </citation>
    <scope>NUCLEOTIDE SEQUENCE [LARGE SCALE GENOMIC DNA]</scope>
    <source>
        <strain>ATCC 15305 / DSM 20229 / NCIMB 8711 / NCTC 7292 / S-41</strain>
    </source>
</reference>
<proteinExistence type="inferred from homology"/>
<comment type="function">
    <text evidence="1">Chaperone that serves for the intracellular sequestration and transport of Cu(+). Delivers Cu(+) to the copper-exporting P-type ATPase A (CopA) (By similarity).</text>
</comment>
<comment type="subcellular location">
    <subcellularLocation>
        <location evidence="1">Cytoplasm</location>
    </subcellularLocation>
</comment>
<evidence type="ECO:0000250" key="1"/>
<evidence type="ECO:0000255" key="2">
    <source>
        <dbReference type="PROSITE-ProRule" id="PRU00280"/>
    </source>
</evidence>
<gene>
    <name type="primary">copZ</name>
    <name type="ordered locus">SSP0296</name>
</gene>